<name>FOLD_STRPM</name>
<proteinExistence type="inferred from homology"/>
<feature type="chain" id="PRO_0000268519" description="Bifunctional protein FolD">
    <location>
        <begin position="1"/>
        <end position="284"/>
    </location>
</feature>
<feature type="binding site" evidence="1">
    <location>
        <begin position="165"/>
        <end position="167"/>
    </location>
    <ligand>
        <name>NADP(+)</name>
        <dbReference type="ChEBI" id="CHEBI:58349"/>
    </ligand>
</feature>
<feature type="binding site" evidence="1">
    <location>
        <position position="190"/>
    </location>
    <ligand>
        <name>NADP(+)</name>
        <dbReference type="ChEBI" id="CHEBI:58349"/>
    </ligand>
</feature>
<evidence type="ECO:0000255" key="1">
    <source>
        <dbReference type="HAMAP-Rule" id="MF_01576"/>
    </source>
</evidence>
<evidence type="ECO:0000305" key="2"/>
<sequence>MTELIDGKALAQKMQQELAAKVNNLKQKKGIVPGLAVILVGDDPASQVYVRNKERAALTVGFKSETVRLSEFICQEELIAVIERYNADNTIHGILVQLPLPNHINDKKIILAIDPKKDVDGFHPMNTGHLWSGRPLMVPCTPSGIMELLREYNVNLEGKHAVIIGRSNIVGKPMAQLLLDKNATVTLTHSRTRQLEEVCRCADVLIVAIGQGHFITKQYIKDGAIVIDVGMNRDDNGKLIGDVAFDEVAEVAAKITPVPGGVGPMTIAMLLEQTYQSALRSTHK</sequence>
<dbReference type="EC" id="1.5.1.5" evidence="1"/>
<dbReference type="EC" id="3.5.4.9" evidence="1"/>
<dbReference type="EMBL" id="CP000056">
    <property type="protein sequence ID" value="AAX72283.1"/>
    <property type="status" value="ALT_INIT"/>
    <property type="molecule type" value="Genomic_DNA"/>
</dbReference>
<dbReference type="RefSeq" id="WP_010922486.1">
    <property type="nucleotide sequence ID" value="NC_007296.2"/>
</dbReference>
<dbReference type="SMR" id="Q48SM7"/>
<dbReference type="KEGG" id="spb:M28_Spy1173"/>
<dbReference type="HOGENOM" id="CLU_034045_2_1_9"/>
<dbReference type="UniPathway" id="UPA00193"/>
<dbReference type="GO" id="GO:0005829">
    <property type="term" value="C:cytosol"/>
    <property type="evidence" value="ECO:0007669"/>
    <property type="project" value="TreeGrafter"/>
</dbReference>
<dbReference type="GO" id="GO:0004477">
    <property type="term" value="F:methenyltetrahydrofolate cyclohydrolase activity"/>
    <property type="evidence" value="ECO:0007669"/>
    <property type="project" value="UniProtKB-UniRule"/>
</dbReference>
<dbReference type="GO" id="GO:0004488">
    <property type="term" value="F:methylenetetrahydrofolate dehydrogenase (NADP+) activity"/>
    <property type="evidence" value="ECO:0007669"/>
    <property type="project" value="UniProtKB-UniRule"/>
</dbReference>
<dbReference type="GO" id="GO:0000105">
    <property type="term" value="P:L-histidine biosynthetic process"/>
    <property type="evidence" value="ECO:0007669"/>
    <property type="project" value="UniProtKB-KW"/>
</dbReference>
<dbReference type="GO" id="GO:0009086">
    <property type="term" value="P:methionine biosynthetic process"/>
    <property type="evidence" value="ECO:0007669"/>
    <property type="project" value="UniProtKB-KW"/>
</dbReference>
<dbReference type="GO" id="GO:0006164">
    <property type="term" value="P:purine nucleotide biosynthetic process"/>
    <property type="evidence" value="ECO:0007669"/>
    <property type="project" value="UniProtKB-KW"/>
</dbReference>
<dbReference type="GO" id="GO:0035999">
    <property type="term" value="P:tetrahydrofolate interconversion"/>
    <property type="evidence" value="ECO:0007669"/>
    <property type="project" value="UniProtKB-UniRule"/>
</dbReference>
<dbReference type="CDD" id="cd01080">
    <property type="entry name" value="NAD_bind_m-THF_DH_Cyclohyd"/>
    <property type="match status" value="1"/>
</dbReference>
<dbReference type="FunFam" id="3.40.50.10860:FF:000001">
    <property type="entry name" value="Bifunctional protein FolD"/>
    <property type="match status" value="1"/>
</dbReference>
<dbReference type="FunFam" id="3.40.50.720:FF:000094">
    <property type="entry name" value="Bifunctional protein FolD"/>
    <property type="match status" value="1"/>
</dbReference>
<dbReference type="Gene3D" id="3.40.50.10860">
    <property type="entry name" value="Leucine Dehydrogenase, chain A, domain 1"/>
    <property type="match status" value="1"/>
</dbReference>
<dbReference type="Gene3D" id="3.40.50.720">
    <property type="entry name" value="NAD(P)-binding Rossmann-like Domain"/>
    <property type="match status" value="1"/>
</dbReference>
<dbReference type="HAMAP" id="MF_01576">
    <property type="entry name" value="THF_DHG_CYH"/>
    <property type="match status" value="1"/>
</dbReference>
<dbReference type="InterPro" id="IPR046346">
    <property type="entry name" value="Aminoacid_DH-like_N_sf"/>
</dbReference>
<dbReference type="InterPro" id="IPR036291">
    <property type="entry name" value="NAD(P)-bd_dom_sf"/>
</dbReference>
<dbReference type="InterPro" id="IPR000672">
    <property type="entry name" value="THF_DH/CycHdrlase"/>
</dbReference>
<dbReference type="InterPro" id="IPR020630">
    <property type="entry name" value="THF_DH/CycHdrlase_cat_dom"/>
</dbReference>
<dbReference type="InterPro" id="IPR020867">
    <property type="entry name" value="THF_DH/CycHdrlase_CS"/>
</dbReference>
<dbReference type="InterPro" id="IPR020631">
    <property type="entry name" value="THF_DH/CycHdrlase_NAD-bd_dom"/>
</dbReference>
<dbReference type="NCBIfam" id="NF008058">
    <property type="entry name" value="PRK10792.1"/>
    <property type="match status" value="1"/>
</dbReference>
<dbReference type="NCBIfam" id="NF010776">
    <property type="entry name" value="PRK14179.1"/>
    <property type="match status" value="1"/>
</dbReference>
<dbReference type="NCBIfam" id="NF010783">
    <property type="entry name" value="PRK14186.1"/>
    <property type="match status" value="1"/>
</dbReference>
<dbReference type="NCBIfam" id="NF010785">
    <property type="entry name" value="PRK14188.1"/>
    <property type="match status" value="1"/>
</dbReference>
<dbReference type="PANTHER" id="PTHR48099:SF5">
    <property type="entry name" value="C-1-TETRAHYDROFOLATE SYNTHASE, CYTOPLASMIC"/>
    <property type="match status" value="1"/>
</dbReference>
<dbReference type="PANTHER" id="PTHR48099">
    <property type="entry name" value="C-1-TETRAHYDROFOLATE SYNTHASE, CYTOPLASMIC-RELATED"/>
    <property type="match status" value="1"/>
</dbReference>
<dbReference type="Pfam" id="PF00763">
    <property type="entry name" value="THF_DHG_CYH"/>
    <property type="match status" value="1"/>
</dbReference>
<dbReference type="Pfam" id="PF02882">
    <property type="entry name" value="THF_DHG_CYH_C"/>
    <property type="match status" value="1"/>
</dbReference>
<dbReference type="PRINTS" id="PR00085">
    <property type="entry name" value="THFDHDRGNASE"/>
</dbReference>
<dbReference type="SUPFAM" id="SSF53223">
    <property type="entry name" value="Aminoacid dehydrogenase-like, N-terminal domain"/>
    <property type="match status" value="1"/>
</dbReference>
<dbReference type="SUPFAM" id="SSF51735">
    <property type="entry name" value="NAD(P)-binding Rossmann-fold domains"/>
    <property type="match status" value="1"/>
</dbReference>
<dbReference type="PROSITE" id="PS00766">
    <property type="entry name" value="THF_DHG_CYH_1"/>
    <property type="match status" value="1"/>
</dbReference>
<dbReference type="PROSITE" id="PS00767">
    <property type="entry name" value="THF_DHG_CYH_2"/>
    <property type="match status" value="1"/>
</dbReference>
<reference key="1">
    <citation type="journal article" date="2005" name="J. Infect. Dis.">
        <title>Genome sequence of a serotype M28 strain of group A Streptococcus: potential new insights into puerperal sepsis and bacterial disease specificity.</title>
        <authorList>
            <person name="Green N.M."/>
            <person name="Zhang S."/>
            <person name="Porcella S.F."/>
            <person name="Nagiec M.J."/>
            <person name="Barbian K.D."/>
            <person name="Beres S.B."/>
            <person name="Lefebvre R.B."/>
            <person name="Musser J.M."/>
        </authorList>
    </citation>
    <scope>NUCLEOTIDE SEQUENCE [LARGE SCALE GENOMIC DNA]</scope>
    <source>
        <strain>MGAS6180</strain>
    </source>
</reference>
<organism>
    <name type="scientific">Streptococcus pyogenes serotype M28 (strain MGAS6180)</name>
    <dbReference type="NCBI Taxonomy" id="319701"/>
    <lineage>
        <taxon>Bacteria</taxon>
        <taxon>Bacillati</taxon>
        <taxon>Bacillota</taxon>
        <taxon>Bacilli</taxon>
        <taxon>Lactobacillales</taxon>
        <taxon>Streptococcaceae</taxon>
        <taxon>Streptococcus</taxon>
    </lineage>
</organism>
<comment type="function">
    <text evidence="1">Catalyzes the oxidation of 5,10-methylenetetrahydrofolate to 5,10-methenyltetrahydrofolate and then the hydrolysis of 5,10-methenyltetrahydrofolate to 10-formyltetrahydrofolate.</text>
</comment>
<comment type="catalytic activity">
    <reaction evidence="1">
        <text>(6R)-5,10-methylene-5,6,7,8-tetrahydrofolate + NADP(+) = (6R)-5,10-methenyltetrahydrofolate + NADPH</text>
        <dbReference type="Rhea" id="RHEA:22812"/>
        <dbReference type="ChEBI" id="CHEBI:15636"/>
        <dbReference type="ChEBI" id="CHEBI:57455"/>
        <dbReference type="ChEBI" id="CHEBI:57783"/>
        <dbReference type="ChEBI" id="CHEBI:58349"/>
        <dbReference type="EC" id="1.5.1.5"/>
    </reaction>
</comment>
<comment type="catalytic activity">
    <reaction evidence="1">
        <text>(6R)-5,10-methenyltetrahydrofolate + H2O = (6R)-10-formyltetrahydrofolate + H(+)</text>
        <dbReference type="Rhea" id="RHEA:23700"/>
        <dbReference type="ChEBI" id="CHEBI:15377"/>
        <dbReference type="ChEBI" id="CHEBI:15378"/>
        <dbReference type="ChEBI" id="CHEBI:57455"/>
        <dbReference type="ChEBI" id="CHEBI:195366"/>
        <dbReference type="EC" id="3.5.4.9"/>
    </reaction>
</comment>
<comment type="pathway">
    <text evidence="1">One-carbon metabolism; tetrahydrofolate interconversion.</text>
</comment>
<comment type="subunit">
    <text evidence="1">Homodimer.</text>
</comment>
<comment type="similarity">
    <text evidence="1">Belongs to the tetrahydrofolate dehydrogenase/cyclohydrolase family.</text>
</comment>
<comment type="sequence caution" evidence="2">
    <conflict type="erroneous initiation">
        <sequence resource="EMBL-CDS" id="AAX72283"/>
    </conflict>
</comment>
<protein>
    <recommendedName>
        <fullName evidence="1">Bifunctional protein FolD</fullName>
    </recommendedName>
    <domain>
        <recommendedName>
            <fullName evidence="1">Methylenetetrahydrofolate dehydrogenase</fullName>
            <ecNumber evidence="1">1.5.1.5</ecNumber>
        </recommendedName>
    </domain>
    <domain>
        <recommendedName>
            <fullName evidence="1">Methenyltetrahydrofolate cyclohydrolase</fullName>
            <ecNumber evidence="1">3.5.4.9</ecNumber>
        </recommendedName>
    </domain>
</protein>
<keyword id="KW-0028">Amino-acid biosynthesis</keyword>
<keyword id="KW-0368">Histidine biosynthesis</keyword>
<keyword id="KW-0378">Hydrolase</keyword>
<keyword id="KW-0486">Methionine biosynthesis</keyword>
<keyword id="KW-0511">Multifunctional enzyme</keyword>
<keyword id="KW-0521">NADP</keyword>
<keyword id="KW-0554">One-carbon metabolism</keyword>
<keyword id="KW-0560">Oxidoreductase</keyword>
<keyword id="KW-0658">Purine biosynthesis</keyword>
<gene>
    <name evidence="1" type="primary">folD</name>
    <name type="ordered locus">M28_Spy1173</name>
</gene>
<accession>Q48SM7</accession>